<reference key="1">
    <citation type="submission" date="2006-05" db="EMBL/GenBank/DDBJ databases">
        <authorList>
            <consortium name="NIH - Mammalian Gene Collection (MGC) project"/>
        </authorList>
    </citation>
    <scope>NUCLEOTIDE SEQUENCE [LARGE SCALE MRNA]</scope>
    <source>
        <strain>Hereford</strain>
        <tissue>Ascending colon</tissue>
    </source>
</reference>
<keyword id="KW-0007">Acetylation</keyword>
<keyword id="KW-0963">Cytoplasm</keyword>
<keyword id="KW-0440">LIM domain</keyword>
<keyword id="KW-0479">Metal-binding</keyword>
<keyword id="KW-0539">Nucleus</keyword>
<keyword id="KW-1185">Reference proteome</keyword>
<keyword id="KW-0862">Zinc</keyword>
<feature type="chain" id="PRO_0000251206" description="LIM domain-containing protein 2">
    <location>
        <begin position="1"/>
        <end position="128"/>
    </location>
</feature>
<feature type="domain" description="LIM zinc-binding" evidence="2">
    <location>
        <begin position="39"/>
        <end position="99"/>
    </location>
</feature>
<feature type="region of interest" description="Disordered" evidence="3">
    <location>
        <begin position="1"/>
        <end position="25"/>
    </location>
</feature>
<feature type="binding site" evidence="1">
    <location>
        <position position="41"/>
    </location>
    <ligand>
        <name>Zn(2+)</name>
        <dbReference type="ChEBI" id="CHEBI:29105"/>
        <label>1</label>
    </ligand>
</feature>
<feature type="binding site" evidence="1">
    <location>
        <position position="44"/>
    </location>
    <ligand>
        <name>Zn(2+)</name>
        <dbReference type="ChEBI" id="CHEBI:29105"/>
        <label>1</label>
    </ligand>
</feature>
<feature type="binding site" evidence="1">
    <location>
        <position position="62"/>
    </location>
    <ligand>
        <name>Zn(2+)</name>
        <dbReference type="ChEBI" id="CHEBI:29105"/>
        <label>1</label>
    </ligand>
</feature>
<feature type="binding site" evidence="1">
    <location>
        <position position="65"/>
    </location>
    <ligand>
        <name>Zn(2+)</name>
        <dbReference type="ChEBI" id="CHEBI:29105"/>
        <label>1</label>
    </ligand>
</feature>
<feature type="binding site" evidence="1">
    <location>
        <position position="68"/>
    </location>
    <ligand>
        <name>Zn(2+)</name>
        <dbReference type="ChEBI" id="CHEBI:29105"/>
        <label>2</label>
    </ligand>
</feature>
<feature type="binding site" evidence="1">
    <location>
        <position position="71"/>
    </location>
    <ligand>
        <name>Zn(2+)</name>
        <dbReference type="ChEBI" id="CHEBI:29105"/>
        <label>2</label>
    </ligand>
</feature>
<feature type="binding site" evidence="1">
    <location>
        <position position="89"/>
    </location>
    <ligand>
        <name>Zn(2+)</name>
        <dbReference type="ChEBI" id="CHEBI:29105"/>
        <label>2</label>
    </ligand>
</feature>
<feature type="binding site" evidence="1">
    <location>
        <position position="92"/>
    </location>
    <ligand>
        <name>Zn(2+)</name>
        <dbReference type="ChEBI" id="CHEBI:29105"/>
        <label>2</label>
    </ligand>
</feature>
<feature type="modified residue" description="N-acetylmethionine" evidence="1">
    <location>
        <position position="1"/>
    </location>
</feature>
<dbReference type="EMBL" id="BC116116">
    <property type="protein sequence ID" value="AAI16117.1"/>
    <property type="molecule type" value="mRNA"/>
</dbReference>
<dbReference type="RefSeq" id="NP_001035602.2">
    <property type="nucleotide sequence ID" value="NM_001040512.2"/>
</dbReference>
<dbReference type="RefSeq" id="XP_005220893.1">
    <property type="nucleotide sequence ID" value="XM_005220836.3"/>
</dbReference>
<dbReference type="RefSeq" id="XP_005220894.1">
    <property type="nucleotide sequence ID" value="XM_005220837.4"/>
</dbReference>
<dbReference type="BMRB" id="Q1LZA7"/>
<dbReference type="SMR" id="Q1LZA7"/>
<dbReference type="FunCoup" id="Q1LZA7">
    <property type="interactions" value="630"/>
</dbReference>
<dbReference type="STRING" id="9913.ENSBTAP00000010719"/>
<dbReference type="PaxDb" id="9913-ENSBTAP00000010719"/>
<dbReference type="GeneID" id="508942"/>
<dbReference type="KEGG" id="bta:508942"/>
<dbReference type="CTD" id="80774"/>
<dbReference type="VEuPathDB" id="HostDB:ENSBTAG00000008154"/>
<dbReference type="eggNOG" id="KOG1700">
    <property type="taxonomic scope" value="Eukaryota"/>
</dbReference>
<dbReference type="HOGENOM" id="CLU_026811_3_0_1"/>
<dbReference type="InParanoid" id="Q1LZA7"/>
<dbReference type="OMA" id="APAHEAK"/>
<dbReference type="OrthoDB" id="6129702at2759"/>
<dbReference type="Proteomes" id="UP000009136">
    <property type="component" value="Chromosome 19"/>
</dbReference>
<dbReference type="Bgee" id="ENSBTAG00000008154">
    <property type="expression patterns" value="Expressed in blood and 105 other cell types or tissues"/>
</dbReference>
<dbReference type="GO" id="GO:0015629">
    <property type="term" value="C:actin cytoskeleton"/>
    <property type="evidence" value="ECO:0000318"/>
    <property type="project" value="GO_Central"/>
</dbReference>
<dbReference type="GO" id="GO:0005737">
    <property type="term" value="C:cytoplasm"/>
    <property type="evidence" value="ECO:0007669"/>
    <property type="project" value="UniProtKB-SubCell"/>
</dbReference>
<dbReference type="GO" id="GO:0005634">
    <property type="term" value="C:nucleus"/>
    <property type="evidence" value="ECO:0007669"/>
    <property type="project" value="UniProtKB-SubCell"/>
</dbReference>
<dbReference type="GO" id="GO:0005886">
    <property type="term" value="C:plasma membrane"/>
    <property type="evidence" value="ECO:0000318"/>
    <property type="project" value="GO_Central"/>
</dbReference>
<dbReference type="GO" id="GO:0051015">
    <property type="term" value="F:actin filament binding"/>
    <property type="evidence" value="ECO:0000318"/>
    <property type="project" value="GO_Central"/>
</dbReference>
<dbReference type="GO" id="GO:0046872">
    <property type="term" value="F:metal ion binding"/>
    <property type="evidence" value="ECO:0007669"/>
    <property type="project" value="UniProtKB-KW"/>
</dbReference>
<dbReference type="GO" id="GO:0051017">
    <property type="term" value="P:actin filament bundle assembly"/>
    <property type="evidence" value="ECO:0000318"/>
    <property type="project" value="GO_Central"/>
</dbReference>
<dbReference type="CDD" id="cd09486">
    <property type="entry name" value="LIM_Eplin_like_1"/>
    <property type="match status" value="1"/>
</dbReference>
<dbReference type="FunFam" id="2.10.110.10:FF:000002">
    <property type="entry name" value="LIM domain and actin-binding 1"/>
    <property type="match status" value="1"/>
</dbReference>
<dbReference type="Gene3D" id="2.10.110.10">
    <property type="entry name" value="Cysteine Rich Protein"/>
    <property type="match status" value="1"/>
</dbReference>
<dbReference type="InterPro" id="IPR044115">
    <property type="entry name" value="LIM_LIMD2"/>
</dbReference>
<dbReference type="InterPro" id="IPR001781">
    <property type="entry name" value="Znf_LIM"/>
</dbReference>
<dbReference type="PANTHER" id="PTHR24206">
    <property type="entry name" value="OS06G0237300 PROTEIN"/>
    <property type="match status" value="1"/>
</dbReference>
<dbReference type="Pfam" id="PF00412">
    <property type="entry name" value="LIM"/>
    <property type="match status" value="1"/>
</dbReference>
<dbReference type="SMART" id="SM00132">
    <property type="entry name" value="LIM"/>
    <property type="match status" value="1"/>
</dbReference>
<dbReference type="SUPFAM" id="SSF57716">
    <property type="entry name" value="Glucocorticoid receptor-like (DNA-binding domain)"/>
    <property type="match status" value="2"/>
</dbReference>
<dbReference type="PROSITE" id="PS00478">
    <property type="entry name" value="LIM_DOMAIN_1"/>
    <property type="match status" value="1"/>
</dbReference>
<dbReference type="PROSITE" id="PS50023">
    <property type="entry name" value="LIM_DOMAIN_2"/>
    <property type="match status" value="1"/>
</dbReference>
<name>LIMD2_BOVIN</name>
<evidence type="ECO:0000250" key="1">
    <source>
        <dbReference type="UniProtKB" id="Q9BT23"/>
    </source>
</evidence>
<evidence type="ECO:0000255" key="2">
    <source>
        <dbReference type="PROSITE-ProRule" id="PRU00125"/>
    </source>
</evidence>
<evidence type="ECO:0000256" key="3">
    <source>
        <dbReference type="SAM" id="MobiDB-lite"/>
    </source>
</evidence>
<evidence type="ECO:0000305" key="4"/>
<proteinExistence type="evidence at transcript level"/>
<organism>
    <name type="scientific">Bos taurus</name>
    <name type="common">Bovine</name>
    <dbReference type="NCBI Taxonomy" id="9913"/>
    <lineage>
        <taxon>Eukaryota</taxon>
        <taxon>Metazoa</taxon>
        <taxon>Chordata</taxon>
        <taxon>Craniata</taxon>
        <taxon>Vertebrata</taxon>
        <taxon>Euteleostomi</taxon>
        <taxon>Mammalia</taxon>
        <taxon>Eutheria</taxon>
        <taxon>Laurasiatheria</taxon>
        <taxon>Artiodactyla</taxon>
        <taxon>Ruminantia</taxon>
        <taxon>Pecora</taxon>
        <taxon>Bovidae</taxon>
        <taxon>Bovinae</taxon>
        <taxon>Bos</taxon>
    </lineage>
</organism>
<comment type="function">
    <text evidence="1">Acts as an activator of the protein-kinase ILK, thereby regulating cell motility.</text>
</comment>
<comment type="subunit">
    <text evidence="1">Interacts with ILK.</text>
</comment>
<comment type="subcellular location">
    <subcellularLocation>
        <location evidence="1">Cytoplasm</location>
    </subcellularLocation>
    <subcellularLocation>
        <location evidence="1">Nucleus</location>
    </subcellularLocation>
    <text evidence="1">Mainly found in cytoplasm, concentrated in membrane ruffles and in streaks reminiscent of focal adhesion plaques. Also found in nucleus.</text>
</comment>
<protein>
    <recommendedName>
        <fullName evidence="4">LIM domain-containing protein 2</fullName>
    </recommendedName>
</protein>
<sequence>MFQAAGAAQATPSHEAKGGGSSSTVQRSKSFSLRAQVKETCAACQKTVYPMERLVADKLIFHSSCFCCKHCHTKLSLGSYAALHGEFYCKPHFQQLFKSKGNYDEGFGRKQHKELWAHKEVDPGTKTA</sequence>
<gene>
    <name type="primary">LIMD2</name>
</gene>
<accession>Q1LZA7</accession>